<accession>B8FCY7</accession>
<gene>
    <name evidence="1" type="primary">rbfA</name>
    <name type="ordered locus">Dalk_4740</name>
</gene>
<proteinExistence type="inferred from homology"/>
<evidence type="ECO:0000255" key="1">
    <source>
        <dbReference type="HAMAP-Rule" id="MF_00003"/>
    </source>
</evidence>
<dbReference type="EMBL" id="CP001322">
    <property type="protein sequence ID" value="ACL06418.1"/>
    <property type="molecule type" value="Genomic_DNA"/>
</dbReference>
<dbReference type="RefSeq" id="WP_015949457.1">
    <property type="nucleotide sequence ID" value="NC_011768.1"/>
</dbReference>
<dbReference type="SMR" id="B8FCY7"/>
<dbReference type="KEGG" id="dal:Dalk_4740"/>
<dbReference type="eggNOG" id="COG0858">
    <property type="taxonomic scope" value="Bacteria"/>
</dbReference>
<dbReference type="HOGENOM" id="CLU_089475_5_1_7"/>
<dbReference type="Proteomes" id="UP000000739">
    <property type="component" value="Chromosome"/>
</dbReference>
<dbReference type="GO" id="GO:0005829">
    <property type="term" value="C:cytosol"/>
    <property type="evidence" value="ECO:0007669"/>
    <property type="project" value="TreeGrafter"/>
</dbReference>
<dbReference type="GO" id="GO:0043024">
    <property type="term" value="F:ribosomal small subunit binding"/>
    <property type="evidence" value="ECO:0007669"/>
    <property type="project" value="TreeGrafter"/>
</dbReference>
<dbReference type="GO" id="GO:0030490">
    <property type="term" value="P:maturation of SSU-rRNA"/>
    <property type="evidence" value="ECO:0007669"/>
    <property type="project" value="UniProtKB-UniRule"/>
</dbReference>
<dbReference type="Gene3D" id="3.30.300.20">
    <property type="match status" value="1"/>
</dbReference>
<dbReference type="HAMAP" id="MF_00003">
    <property type="entry name" value="RbfA"/>
    <property type="match status" value="1"/>
</dbReference>
<dbReference type="InterPro" id="IPR015946">
    <property type="entry name" value="KH_dom-like_a/b"/>
</dbReference>
<dbReference type="InterPro" id="IPR000238">
    <property type="entry name" value="RbfA"/>
</dbReference>
<dbReference type="InterPro" id="IPR023799">
    <property type="entry name" value="RbfA_dom_sf"/>
</dbReference>
<dbReference type="InterPro" id="IPR020053">
    <property type="entry name" value="Ribosome-bd_factorA_CS"/>
</dbReference>
<dbReference type="NCBIfam" id="TIGR00082">
    <property type="entry name" value="rbfA"/>
    <property type="match status" value="1"/>
</dbReference>
<dbReference type="PANTHER" id="PTHR33515">
    <property type="entry name" value="RIBOSOME-BINDING FACTOR A, CHLOROPLASTIC-RELATED"/>
    <property type="match status" value="1"/>
</dbReference>
<dbReference type="PANTHER" id="PTHR33515:SF1">
    <property type="entry name" value="RIBOSOME-BINDING FACTOR A, CHLOROPLASTIC-RELATED"/>
    <property type="match status" value="1"/>
</dbReference>
<dbReference type="Pfam" id="PF02033">
    <property type="entry name" value="RBFA"/>
    <property type="match status" value="1"/>
</dbReference>
<dbReference type="SUPFAM" id="SSF89919">
    <property type="entry name" value="Ribosome-binding factor A, RbfA"/>
    <property type="match status" value="1"/>
</dbReference>
<dbReference type="PROSITE" id="PS01319">
    <property type="entry name" value="RBFA"/>
    <property type="match status" value="1"/>
</dbReference>
<name>RBFA_DESAL</name>
<sequence>MKSIGRQDRVAGRIQQELSALIQKRINDPRLEWATITGVKMTKDLKIARVYYCVFGEEEKKIKVGEAFQQAHGFIKRELAKKLGLRYMPELEFFFDESFDYGRKIESILREIGPLDSPEEPEE</sequence>
<comment type="function">
    <text evidence="1">One of several proteins that assist in the late maturation steps of the functional core of the 30S ribosomal subunit. Associates with free 30S ribosomal subunits (but not with 30S subunits that are part of 70S ribosomes or polysomes). Required for efficient processing of 16S rRNA. May interact with the 5'-terminal helix region of 16S rRNA.</text>
</comment>
<comment type="subunit">
    <text evidence="1">Monomer. Binds 30S ribosomal subunits, but not 50S ribosomal subunits or 70S ribosomes.</text>
</comment>
<comment type="subcellular location">
    <subcellularLocation>
        <location evidence="1">Cytoplasm</location>
    </subcellularLocation>
</comment>
<comment type="similarity">
    <text evidence="1">Belongs to the RbfA family.</text>
</comment>
<protein>
    <recommendedName>
        <fullName evidence="1">Ribosome-binding factor A</fullName>
    </recommendedName>
</protein>
<keyword id="KW-0963">Cytoplasm</keyword>
<keyword id="KW-1185">Reference proteome</keyword>
<keyword id="KW-0690">Ribosome biogenesis</keyword>
<organism>
    <name type="scientific">Desulfatibacillum aliphaticivorans</name>
    <dbReference type="NCBI Taxonomy" id="218208"/>
    <lineage>
        <taxon>Bacteria</taxon>
        <taxon>Pseudomonadati</taxon>
        <taxon>Thermodesulfobacteriota</taxon>
        <taxon>Desulfobacteria</taxon>
        <taxon>Desulfobacterales</taxon>
        <taxon>Desulfatibacillaceae</taxon>
        <taxon>Desulfatibacillum</taxon>
    </lineage>
</organism>
<reference key="1">
    <citation type="journal article" date="2012" name="Environ. Microbiol.">
        <title>The genome sequence of Desulfatibacillum alkenivorans AK-01: a blueprint for anaerobic alkane oxidation.</title>
        <authorList>
            <person name="Callaghan A.V."/>
            <person name="Morris B.E."/>
            <person name="Pereira I.A."/>
            <person name="McInerney M.J."/>
            <person name="Austin R.N."/>
            <person name="Groves J.T."/>
            <person name="Kukor J.J."/>
            <person name="Suflita J.M."/>
            <person name="Young L.Y."/>
            <person name="Zylstra G.J."/>
            <person name="Wawrik B."/>
        </authorList>
    </citation>
    <scope>NUCLEOTIDE SEQUENCE [LARGE SCALE GENOMIC DNA]</scope>
    <source>
        <strain>AK-01</strain>
    </source>
</reference>
<feature type="chain" id="PRO_1000193249" description="Ribosome-binding factor A">
    <location>
        <begin position="1"/>
        <end position="123"/>
    </location>
</feature>